<proteinExistence type="inferred from homology"/>
<gene>
    <name evidence="1" type="primary">gcvH</name>
    <name type="ordered locus">YE3392</name>
</gene>
<reference key="1">
    <citation type="journal article" date="2006" name="PLoS Genet.">
        <title>The complete genome sequence and comparative genome analysis of the high pathogenicity Yersinia enterocolitica strain 8081.</title>
        <authorList>
            <person name="Thomson N.R."/>
            <person name="Howard S."/>
            <person name="Wren B.W."/>
            <person name="Holden M.T.G."/>
            <person name="Crossman L."/>
            <person name="Challis G.L."/>
            <person name="Churcher C."/>
            <person name="Mungall K."/>
            <person name="Brooks K."/>
            <person name="Chillingworth T."/>
            <person name="Feltwell T."/>
            <person name="Abdellah Z."/>
            <person name="Hauser H."/>
            <person name="Jagels K."/>
            <person name="Maddison M."/>
            <person name="Moule S."/>
            <person name="Sanders M."/>
            <person name="Whitehead S."/>
            <person name="Quail M.A."/>
            <person name="Dougan G."/>
            <person name="Parkhill J."/>
            <person name="Prentice M.B."/>
        </authorList>
    </citation>
    <scope>NUCLEOTIDE SEQUENCE [LARGE SCALE GENOMIC DNA]</scope>
    <source>
        <strain>NCTC 13174 / 8081</strain>
    </source>
</reference>
<accession>A1JPN4</accession>
<comment type="function">
    <text evidence="1">The glycine cleavage system catalyzes the degradation of glycine. The H protein shuttles the methylamine group of glycine from the P protein to the T protein.</text>
</comment>
<comment type="cofactor">
    <cofactor evidence="1">
        <name>(R)-lipoate</name>
        <dbReference type="ChEBI" id="CHEBI:83088"/>
    </cofactor>
    <text evidence="1">Binds 1 lipoyl cofactor covalently.</text>
</comment>
<comment type="subunit">
    <text evidence="1">The glycine cleavage system is composed of four proteins: P, T, L and H.</text>
</comment>
<comment type="similarity">
    <text evidence="1">Belongs to the GcvH family.</text>
</comment>
<protein>
    <recommendedName>
        <fullName evidence="1">Glycine cleavage system H protein</fullName>
    </recommendedName>
</protein>
<dbReference type="EMBL" id="AM286415">
    <property type="protein sequence ID" value="CAL13418.1"/>
    <property type="molecule type" value="Genomic_DNA"/>
</dbReference>
<dbReference type="RefSeq" id="WP_005173499.1">
    <property type="nucleotide sequence ID" value="NC_008800.1"/>
</dbReference>
<dbReference type="RefSeq" id="YP_001007561.1">
    <property type="nucleotide sequence ID" value="NC_008800.1"/>
</dbReference>
<dbReference type="SMR" id="A1JPN4"/>
<dbReference type="KEGG" id="yen:YE3392"/>
<dbReference type="PATRIC" id="fig|393305.7.peg.3602"/>
<dbReference type="eggNOG" id="COG0509">
    <property type="taxonomic scope" value="Bacteria"/>
</dbReference>
<dbReference type="HOGENOM" id="CLU_097408_2_1_6"/>
<dbReference type="OrthoDB" id="9796712at2"/>
<dbReference type="Proteomes" id="UP000000642">
    <property type="component" value="Chromosome"/>
</dbReference>
<dbReference type="GO" id="GO:0005829">
    <property type="term" value="C:cytosol"/>
    <property type="evidence" value="ECO:0007669"/>
    <property type="project" value="TreeGrafter"/>
</dbReference>
<dbReference type="GO" id="GO:0005960">
    <property type="term" value="C:glycine cleavage complex"/>
    <property type="evidence" value="ECO:0007669"/>
    <property type="project" value="InterPro"/>
</dbReference>
<dbReference type="GO" id="GO:0019464">
    <property type="term" value="P:glycine decarboxylation via glycine cleavage system"/>
    <property type="evidence" value="ECO:0007669"/>
    <property type="project" value="UniProtKB-UniRule"/>
</dbReference>
<dbReference type="CDD" id="cd06848">
    <property type="entry name" value="GCS_H"/>
    <property type="match status" value="1"/>
</dbReference>
<dbReference type="FunFam" id="2.40.50.100:FF:000011">
    <property type="entry name" value="Glycine cleavage system H protein"/>
    <property type="match status" value="1"/>
</dbReference>
<dbReference type="Gene3D" id="2.40.50.100">
    <property type="match status" value="1"/>
</dbReference>
<dbReference type="HAMAP" id="MF_00272">
    <property type="entry name" value="GcvH"/>
    <property type="match status" value="1"/>
</dbReference>
<dbReference type="InterPro" id="IPR003016">
    <property type="entry name" value="2-oxoA_DH_lipoyl-BS"/>
</dbReference>
<dbReference type="InterPro" id="IPR000089">
    <property type="entry name" value="Biotin_lipoyl"/>
</dbReference>
<dbReference type="InterPro" id="IPR002930">
    <property type="entry name" value="GCV_H"/>
</dbReference>
<dbReference type="InterPro" id="IPR033753">
    <property type="entry name" value="GCV_H/Fam206"/>
</dbReference>
<dbReference type="InterPro" id="IPR017453">
    <property type="entry name" value="GCV_H_sub"/>
</dbReference>
<dbReference type="InterPro" id="IPR011053">
    <property type="entry name" value="Single_hybrid_motif"/>
</dbReference>
<dbReference type="NCBIfam" id="TIGR00527">
    <property type="entry name" value="gcvH"/>
    <property type="match status" value="1"/>
</dbReference>
<dbReference type="NCBIfam" id="NF002270">
    <property type="entry name" value="PRK01202.1"/>
    <property type="match status" value="1"/>
</dbReference>
<dbReference type="PANTHER" id="PTHR11715">
    <property type="entry name" value="GLYCINE CLEAVAGE SYSTEM H PROTEIN"/>
    <property type="match status" value="1"/>
</dbReference>
<dbReference type="PANTHER" id="PTHR11715:SF3">
    <property type="entry name" value="GLYCINE CLEAVAGE SYSTEM H PROTEIN-RELATED"/>
    <property type="match status" value="1"/>
</dbReference>
<dbReference type="Pfam" id="PF01597">
    <property type="entry name" value="GCV_H"/>
    <property type="match status" value="1"/>
</dbReference>
<dbReference type="SUPFAM" id="SSF51230">
    <property type="entry name" value="Single hybrid motif"/>
    <property type="match status" value="1"/>
</dbReference>
<dbReference type="PROSITE" id="PS50968">
    <property type="entry name" value="BIOTINYL_LIPOYL"/>
    <property type="match status" value="1"/>
</dbReference>
<dbReference type="PROSITE" id="PS00189">
    <property type="entry name" value="LIPOYL"/>
    <property type="match status" value="1"/>
</dbReference>
<sequence length="128" mass="13515">MSNVPADLKYASSHEWVRADGDGVYSVGITEHAQELLGDMVFVDLPEVGSEVSAGSDCAVAESVKAASDIYAPISGEIIAVNAELESSPELVNSAPYTDGWLFSIKASDESELDSLLDAEAYLATIEE</sequence>
<evidence type="ECO:0000255" key="1">
    <source>
        <dbReference type="HAMAP-Rule" id="MF_00272"/>
    </source>
</evidence>
<evidence type="ECO:0000255" key="2">
    <source>
        <dbReference type="PROSITE-ProRule" id="PRU01066"/>
    </source>
</evidence>
<keyword id="KW-0450">Lipoyl</keyword>
<name>GCSH_YERE8</name>
<feature type="chain" id="PRO_0000302466" description="Glycine cleavage system H protein">
    <location>
        <begin position="1"/>
        <end position="128"/>
    </location>
</feature>
<feature type="domain" description="Lipoyl-binding" evidence="2">
    <location>
        <begin position="24"/>
        <end position="106"/>
    </location>
</feature>
<feature type="modified residue" description="N6-lipoyllysine" evidence="1">
    <location>
        <position position="65"/>
    </location>
</feature>
<organism>
    <name type="scientific">Yersinia enterocolitica serotype O:8 / biotype 1B (strain NCTC 13174 / 8081)</name>
    <dbReference type="NCBI Taxonomy" id="393305"/>
    <lineage>
        <taxon>Bacteria</taxon>
        <taxon>Pseudomonadati</taxon>
        <taxon>Pseudomonadota</taxon>
        <taxon>Gammaproteobacteria</taxon>
        <taxon>Enterobacterales</taxon>
        <taxon>Yersiniaceae</taxon>
        <taxon>Yersinia</taxon>
    </lineage>
</organism>